<name>RSMC_SHEPC</name>
<reference key="1">
    <citation type="submission" date="2007-04" db="EMBL/GenBank/DDBJ databases">
        <title>Complete sequence of Shewanella putrefaciens CN-32.</title>
        <authorList>
            <consortium name="US DOE Joint Genome Institute"/>
            <person name="Copeland A."/>
            <person name="Lucas S."/>
            <person name="Lapidus A."/>
            <person name="Barry K."/>
            <person name="Detter J.C."/>
            <person name="Glavina del Rio T."/>
            <person name="Hammon N."/>
            <person name="Israni S."/>
            <person name="Dalin E."/>
            <person name="Tice H."/>
            <person name="Pitluck S."/>
            <person name="Chain P."/>
            <person name="Malfatti S."/>
            <person name="Shin M."/>
            <person name="Vergez L."/>
            <person name="Schmutz J."/>
            <person name="Larimer F."/>
            <person name="Land M."/>
            <person name="Hauser L."/>
            <person name="Kyrpides N."/>
            <person name="Mikhailova N."/>
            <person name="Romine M.F."/>
            <person name="Fredrickson J."/>
            <person name="Tiedje J."/>
            <person name="Richardson P."/>
        </authorList>
    </citation>
    <scope>NUCLEOTIDE SEQUENCE [LARGE SCALE GENOMIC DNA]</scope>
    <source>
        <strain>CN-32 / ATCC BAA-453</strain>
    </source>
</reference>
<proteinExistence type="inferred from homology"/>
<protein>
    <recommendedName>
        <fullName evidence="1">Ribosomal RNA small subunit methyltransferase C</fullName>
        <ecNumber evidence="1">2.1.1.172</ecNumber>
    </recommendedName>
    <alternativeName>
        <fullName evidence="1">16S rRNA m2G1207 methyltransferase</fullName>
    </alternativeName>
    <alternativeName>
        <fullName evidence="1">rRNA (guanine-N(2)-)-methyltransferase RsmC</fullName>
    </alternativeName>
</protein>
<feature type="chain" id="PRO_0000369777" description="Ribosomal RNA small subunit methyltransferase C">
    <location>
        <begin position="1"/>
        <end position="347"/>
    </location>
</feature>
<comment type="function">
    <text evidence="1">Specifically methylates the guanine in position 1207 of 16S rRNA in the 30S particle.</text>
</comment>
<comment type="catalytic activity">
    <reaction evidence="1">
        <text>guanosine(1207) in 16S rRNA + S-adenosyl-L-methionine = N(2)-methylguanosine(1207) in 16S rRNA + S-adenosyl-L-homocysteine + H(+)</text>
        <dbReference type="Rhea" id="RHEA:42736"/>
        <dbReference type="Rhea" id="RHEA-COMP:10213"/>
        <dbReference type="Rhea" id="RHEA-COMP:10214"/>
        <dbReference type="ChEBI" id="CHEBI:15378"/>
        <dbReference type="ChEBI" id="CHEBI:57856"/>
        <dbReference type="ChEBI" id="CHEBI:59789"/>
        <dbReference type="ChEBI" id="CHEBI:74269"/>
        <dbReference type="ChEBI" id="CHEBI:74481"/>
        <dbReference type="EC" id="2.1.1.172"/>
    </reaction>
</comment>
<comment type="subunit">
    <text evidence="1">Monomer.</text>
</comment>
<comment type="subcellular location">
    <subcellularLocation>
        <location evidence="1">Cytoplasm</location>
    </subcellularLocation>
</comment>
<comment type="similarity">
    <text evidence="1">Belongs to the methyltransferase superfamily. RsmC family.</text>
</comment>
<evidence type="ECO:0000255" key="1">
    <source>
        <dbReference type="HAMAP-Rule" id="MF_01862"/>
    </source>
</evidence>
<dbReference type="EC" id="2.1.1.172" evidence="1"/>
<dbReference type="EMBL" id="CP000681">
    <property type="protein sequence ID" value="ABP76876.1"/>
    <property type="molecule type" value="Genomic_DNA"/>
</dbReference>
<dbReference type="SMR" id="A4YA93"/>
<dbReference type="STRING" id="319224.Sputcn32_3164"/>
<dbReference type="KEGG" id="spc:Sputcn32_3164"/>
<dbReference type="eggNOG" id="COG2813">
    <property type="taxonomic scope" value="Bacteria"/>
</dbReference>
<dbReference type="HOGENOM" id="CLU_049581_0_1_6"/>
<dbReference type="GO" id="GO:0005737">
    <property type="term" value="C:cytoplasm"/>
    <property type="evidence" value="ECO:0007669"/>
    <property type="project" value="UniProtKB-SubCell"/>
</dbReference>
<dbReference type="GO" id="GO:0052914">
    <property type="term" value="F:16S rRNA (guanine(1207)-N(2))-methyltransferase activity"/>
    <property type="evidence" value="ECO:0007669"/>
    <property type="project" value="UniProtKB-EC"/>
</dbReference>
<dbReference type="GO" id="GO:0003676">
    <property type="term" value="F:nucleic acid binding"/>
    <property type="evidence" value="ECO:0007669"/>
    <property type="project" value="InterPro"/>
</dbReference>
<dbReference type="CDD" id="cd02440">
    <property type="entry name" value="AdoMet_MTases"/>
    <property type="match status" value="1"/>
</dbReference>
<dbReference type="Gene3D" id="3.40.50.150">
    <property type="entry name" value="Vaccinia Virus protein VP39"/>
    <property type="match status" value="2"/>
</dbReference>
<dbReference type="HAMAP" id="MF_01862">
    <property type="entry name" value="16SrRNA_methyltr_C"/>
    <property type="match status" value="1"/>
</dbReference>
<dbReference type="InterPro" id="IPR002052">
    <property type="entry name" value="DNA_methylase_N6_adenine_CS"/>
</dbReference>
<dbReference type="InterPro" id="IPR013675">
    <property type="entry name" value="Mtase_sm_N"/>
</dbReference>
<dbReference type="InterPro" id="IPR023543">
    <property type="entry name" value="rRNA_ssu_MeTfrase_C"/>
</dbReference>
<dbReference type="InterPro" id="IPR046977">
    <property type="entry name" value="RsmC/RlmG"/>
</dbReference>
<dbReference type="InterPro" id="IPR029063">
    <property type="entry name" value="SAM-dependent_MTases_sf"/>
</dbReference>
<dbReference type="InterPro" id="IPR007848">
    <property type="entry name" value="Small_mtfrase_dom"/>
</dbReference>
<dbReference type="PANTHER" id="PTHR47816">
    <property type="entry name" value="RIBOSOMAL RNA SMALL SUBUNIT METHYLTRANSFERASE C"/>
    <property type="match status" value="1"/>
</dbReference>
<dbReference type="PANTHER" id="PTHR47816:SF4">
    <property type="entry name" value="RIBOSOMAL RNA SMALL SUBUNIT METHYLTRANSFERASE C"/>
    <property type="match status" value="1"/>
</dbReference>
<dbReference type="Pfam" id="PF05175">
    <property type="entry name" value="MTS"/>
    <property type="match status" value="1"/>
</dbReference>
<dbReference type="Pfam" id="PF08468">
    <property type="entry name" value="MTS_N"/>
    <property type="match status" value="1"/>
</dbReference>
<dbReference type="SUPFAM" id="SSF53335">
    <property type="entry name" value="S-adenosyl-L-methionine-dependent methyltransferases"/>
    <property type="match status" value="1"/>
</dbReference>
<sequence>MLTNPSQVIIRNQDSLNQHKVLVLNHEADLLPKALLDVAASVDALALDYHHYLHLVPHANSKLRCYFGHELPHQDPIKPEKYDTVIVYFPKAKPLAPYLFTLAANHLVPNGQLLVVGENKGGIKSLVKLLPEYFATGMKLDNARHCLLFGSNLEGRAPAMKLSDWVSQYQLSTPQGEISICNLVGVFSEKRLDQGTELLLSHLPTLSGRVLDFGCGAGVIAAALLKAQPHLSLECIDINAMALASCELTLAANGMTAKVYPSDGLAQTTGKFNGIISNPPFHDGLTSTTNIAKNFVTDSAKQLQHNGIWQIVANRHLPYSDIIAAEFGQLTVPAENNKYKLYYFQQQ</sequence>
<accession>A4YA93</accession>
<keyword id="KW-0963">Cytoplasm</keyword>
<keyword id="KW-0489">Methyltransferase</keyword>
<keyword id="KW-0698">rRNA processing</keyword>
<keyword id="KW-0949">S-adenosyl-L-methionine</keyword>
<keyword id="KW-0808">Transferase</keyword>
<organism>
    <name type="scientific">Shewanella putrefaciens (strain CN-32 / ATCC BAA-453)</name>
    <dbReference type="NCBI Taxonomy" id="319224"/>
    <lineage>
        <taxon>Bacteria</taxon>
        <taxon>Pseudomonadati</taxon>
        <taxon>Pseudomonadota</taxon>
        <taxon>Gammaproteobacteria</taxon>
        <taxon>Alteromonadales</taxon>
        <taxon>Shewanellaceae</taxon>
        <taxon>Shewanella</taxon>
    </lineage>
</organism>
<gene>
    <name evidence="1" type="primary">rsmC</name>
    <name type="ordered locus">Sputcn32_3164</name>
</gene>